<evidence type="ECO:0000255" key="1">
    <source>
        <dbReference type="HAMAP-Rule" id="MF_00296"/>
    </source>
</evidence>
<evidence type="ECO:0000269" key="2">
    <source>
    </source>
</evidence>
<evidence type="ECO:0000269" key="3">
    <source>
    </source>
</evidence>
<evidence type="ECO:0000269" key="4">
    <source>
    </source>
</evidence>
<evidence type="ECO:0000269" key="5">
    <source>
    </source>
</evidence>
<evidence type="ECO:0000303" key="6">
    <source>
    </source>
</evidence>
<evidence type="ECO:0000303" key="7">
    <source>
    </source>
</evidence>
<evidence type="ECO:0000305" key="8"/>
<evidence type="ECO:0000305" key="9">
    <source>
    </source>
</evidence>
<evidence type="ECO:0000305" key="10">
    <source>
    </source>
</evidence>
<evidence type="ECO:0007829" key="11">
    <source>
        <dbReference type="PDB" id="2B61"/>
    </source>
</evidence>
<dbReference type="EC" id="2.3.1.31" evidence="1 2 4"/>
<dbReference type="EMBL" id="L42023">
    <property type="protein sequence ID" value="AAC22916.1"/>
    <property type="molecule type" value="Genomic_DNA"/>
</dbReference>
<dbReference type="PIR" id="D64113">
    <property type="entry name" value="D64113"/>
</dbReference>
<dbReference type="RefSeq" id="NP_439418.1">
    <property type="nucleotide sequence ID" value="NC_000907.1"/>
</dbReference>
<dbReference type="PDB" id="2B61">
    <property type="method" value="X-ray"/>
    <property type="resolution" value="1.65 A"/>
    <property type="chains" value="A=1-358"/>
</dbReference>
<dbReference type="PDBsum" id="2B61"/>
<dbReference type="SMR" id="P45131"/>
<dbReference type="STRING" id="71421.HI_1263"/>
<dbReference type="ESTHER" id="haein-metx">
    <property type="family name" value="Homoserine_transacetylase"/>
</dbReference>
<dbReference type="EnsemblBacteria" id="AAC22916">
    <property type="protein sequence ID" value="AAC22916"/>
    <property type="gene ID" value="HI_1263"/>
</dbReference>
<dbReference type="KEGG" id="hin:HI_1263"/>
<dbReference type="PATRIC" id="fig|71421.8.peg.1315"/>
<dbReference type="eggNOG" id="COG2021">
    <property type="taxonomic scope" value="Bacteria"/>
</dbReference>
<dbReference type="HOGENOM" id="CLU_028760_1_2_6"/>
<dbReference type="OrthoDB" id="9800754at2"/>
<dbReference type="PhylomeDB" id="P45131"/>
<dbReference type="BioCyc" id="HINF71421:G1GJ1-1291-MONOMER"/>
<dbReference type="BRENDA" id="2.3.1.31">
    <property type="organism ID" value="2529"/>
</dbReference>
<dbReference type="SABIO-RK" id="P45131"/>
<dbReference type="UniPathway" id="UPA00051">
    <property type="reaction ID" value="UER00074"/>
</dbReference>
<dbReference type="EvolutionaryTrace" id="P45131"/>
<dbReference type="Proteomes" id="UP000000579">
    <property type="component" value="Chromosome"/>
</dbReference>
<dbReference type="GO" id="GO:0005737">
    <property type="term" value="C:cytoplasm"/>
    <property type="evidence" value="ECO:0007669"/>
    <property type="project" value="UniProtKB-SubCell"/>
</dbReference>
<dbReference type="GO" id="GO:0004414">
    <property type="term" value="F:homoserine O-acetyltransferase activity"/>
    <property type="evidence" value="ECO:0000314"/>
    <property type="project" value="UniProtKB"/>
</dbReference>
<dbReference type="GO" id="GO:0009086">
    <property type="term" value="P:methionine biosynthetic process"/>
    <property type="evidence" value="ECO:0000318"/>
    <property type="project" value="GO_Central"/>
</dbReference>
<dbReference type="FunFam" id="1.10.1740.110:FF:000001">
    <property type="entry name" value="Homoserine O-acetyltransferase"/>
    <property type="match status" value="1"/>
</dbReference>
<dbReference type="Gene3D" id="1.10.1740.110">
    <property type="match status" value="1"/>
</dbReference>
<dbReference type="Gene3D" id="3.40.50.1820">
    <property type="entry name" value="alpha/beta hydrolase"/>
    <property type="match status" value="1"/>
</dbReference>
<dbReference type="HAMAP" id="MF_00296">
    <property type="entry name" value="MetX_acyltransf"/>
    <property type="match status" value="1"/>
</dbReference>
<dbReference type="InterPro" id="IPR000073">
    <property type="entry name" value="AB_hydrolase_1"/>
</dbReference>
<dbReference type="InterPro" id="IPR029058">
    <property type="entry name" value="AB_hydrolase_fold"/>
</dbReference>
<dbReference type="InterPro" id="IPR008220">
    <property type="entry name" value="HAT_MetX-like"/>
</dbReference>
<dbReference type="NCBIfam" id="TIGR01392">
    <property type="entry name" value="homoserO_Ac_trn"/>
    <property type="match status" value="1"/>
</dbReference>
<dbReference type="NCBIfam" id="NF001209">
    <property type="entry name" value="PRK00175.1"/>
    <property type="match status" value="1"/>
</dbReference>
<dbReference type="PANTHER" id="PTHR32268">
    <property type="entry name" value="HOMOSERINE O-ACETYLTRANSFERASE"/>
    <property type="match status" value="1"/>
</dbReference>
<dbReference type="PANTHER" id="PTHR32268:SF11">
    <property type="entry name" value="HOMOSERINE O-ACETYLTRANSFERASE"/>
    <property type="match status" value="1"/>
</dbReference>
<dbReference type="Pfam" id="PF00561">
    <property type="entry name" value="Abhydrolase_1"/>
    <property type="match status" value="1"/>
</dbReference>
<dbReference type="PIRSF" id="PIRSF000443">
    <property type="entry name" value="Homoser_Ac_trans"/>
    <property type="match status" value="1"/>
</dbReference>
<dbReference type="SUPFAM" id="SSF53474">
    <property type="entry name" value="alpha/beta-Hydrolases"/>
    <property type="match status" value="1"/>
</dbReference>
<protein>
    <recommendedName>
        <fullName evidence="1 8">Homoserine O-acetyltransferase</fullName>
        <shortName evidence="1 7">HAT</shortName>
        <ecNumber evidence="1 2 4">2.3.1.31</ecNumber>
    </recommendedName>
    <alternativeName>
        <fullName evidence="8">Homoserine O-trans-acetylase</fullName>
    </alternativeName>
    <alternativeName>
        <fullName evidence="1 6">Homoserine transacetylase</fullName>
        <shortName evidence="1 8">HTA</shortName>
    </alternativeName>
</protein>
<name>METXA_HAEIN</name>
<reference key="1">
    <citation type="journal article" date="1995" name="Science">
        <title>Whole-genome random sequencing and assembly of Haemophilus influenzae Rd.</title>
        <authorList>
            <person name="Fleischmann R.D."/>
            <person name="Adams M.D."/>
            <person name="White O."/>
            <person name="Clayton R.A."/>
            <person name="Kirkness E.F."/>
            <person name="Kerlavage A.R."/>
            <person name="Bult C.J."/>
            <person name="Tomb J.-F."/>
            <person name="Dougherty B.A."/>
            <person name="Merrick J.M."/>
            <person name="McKenney K."/>
            <person name="Sutton G.G."/>
            <person name="FitzHugh W."/>
            <person name="Fields C.A."/>
            <person name="Gocayne J.D."/>
            <person name="Scott J.D."/>
            <person name="Shirley R."/>
            <person name="Liu L.-I."/>
            <person name="Glodek A."/>
            <person name="Kelley J.M."/>
            <person name="Weidman J.F."/>
            <person name="Phillips C.A."/>
            <person name="Spriggs T."/>
            <person name="Hedblom E."/>
            <person name="Cotton M.D."/>
            <person name="Utterback T.R."/>
            <person name="Hanna M.C."/>
            <person name="Nguyen D.T."/>
            <person name="Saudek D.M."/>
            <person name="Brandon R.C."/>
            <person name="Fine L.D."/>
            <person name="Fritchman J.L."/>
            <person name="Fuhrmann J.L."/>
            <person name="Geoghagen N.S.M."/>
            <person name="Gnehm C.L."/>
            <person name="McDonald L.A."/>
            <person name="Small K.V."/>
            <person name="Fraser C.M."/>
            <person name="Smith H.O."/>
            <person name="Venter J.C."/>
        </authorList>
    </citation>
    <scope>NUCLEOTIDE SEQUENCE [LARGE SCALE GENOMIC DNA]</scope>
    <scope>PROTEIN SEQUENCE OF 2-11</scope>
    <source>
        <strain>ATCC 51907 / DSM 11121 / KW20 / Rd</strain>
    </source>
</reference>
<reference key="2">
    <citation type="journal article" date="2000" name="Biochemistry">
        <title>Enzyme-catalyzed acylation of homoserine: mechanistic characterization of the Haemophilus influenzae met2-encoded homoserine transacetylase.</title>
        <authorList>
            <person name="Born T.L."/>
            <person name="Franklin M."/>
            <person name="Blanchard J.S."/>
        </authorList>
    </citation>
    <scope>FUNCTION</scope>
    <scope>CATALYTIC ACTIVITY</scope>
    <scope>MASS SPECTROMETRY</scope>
    <scope>BIOPHYSICOCHEMICAL PROPERTIES</scope>
    <scope>REACTION MECHANISM</scope>
    <scope>SUBUNIT</scope>
</reference>
<reference key="3">
    <citation type="journal article" date="2017" name="Nat. Chem. Biol.">
        <title>Parallel evolution of non-homologous isofunctional enzymes in methionine biosynthesis.</title>
        <authorList>
            <person name="Bastard K."/>
            <person name="Perret A."/>
            <person name="Mariage A."/>
            <person name="Bessonnet T."/>
            <person name="Pinet-Turpault A."/>
            <person name="Petit J.L."/>
            <person name="Darii E."/>
            <person name="Bazire P."/>
            <person name="Vergne-Vaxelaire C."/>
            <person name="Brewee C."/>
            <person name="Debard A."/>
            <person name="Pellouin V."/>
            <person name="Besnard-Gonnet M."/>
            <person name="Artiguenave F."/>
            <person name="Medigue C."/>
            <person name="Vallenet D."/>
            <person name="Danchin A."/>
            <person name="Zaparucha A."/>
            <person name="Weissenbach J."/>
            <person name="Salanoubat M."/>
            <person name="de Berardinis V."/>
        </authorList>
    </citation>
    <scope>FUNCTION</scope>
    <scope>CATALYTIC ACTIVITY</scope>
    <scope>BIOPHYSICOCHEMICAL PROPERTIES</scope>
    <scope>MUTAGENESIS OF LEU-306</scope>
    <scope>3D-STRUCTURE MODELING</scope>
</reference>
<reference key="4">
    <citation type="journal article" date="2005" name="Biochemistry">
        <title>Crystal structure of homoserine transacetylase from Haemophilus influenzae reveals a new family of alpha/beta-hydrolases.</title>
        <authorList>
            <person name="Mirza I.A."/>
            <person name="Nazi I."/>
            <person name="Korczynska M."/>
            <person name="Wright G.D."/>
            <person name="Berghuis A.M."/>
        </authorList>
    </citation>
    <scope>X-RAY CRYSTALLOGRAPHY (1.65 ANGSTROMS)</scope>
    <scope>ACTIVE SITE</scope>
    <scope>SUBUNIT</scope>
</reference>
<organism>
    <name type="scientific">Haemophilus influenzae (strain ATCC 51907 / DSM 11121 / KW20 / Rd)</name>
    <dbReference type="NCBI Taxonomy" id="71421"/>
    <lineage>
        <taxon>Bacteria</taxon>
        <taxon>Pseudomonadati</taxon>
        <taxon>Pseudomonadota</taxon>
        <taxon>Gammaproteobacteria</taxon>
        <taxon>Pasteurellales</taxon>
        <taxon>Pasteurellaceae</taxon>
        <taxon>Haemophilus</taxon>
    </lineage>
</organism>
<proteinExistence type="evidence at protein level"/>
<accession>P45131</accession>
<gene>
    <name evidence="1 7" type="primary">metXA</name>
    <name type="synonym">met2</name>
    <name type="ordered locus">HI_1263</name>
</gene>
<feature type="initiator methionine" description="Removed" evidence="5">
    <location>
        <position position="1"/>
    </location>
</feature>
<feature type="chain" id="PRO_0000155719" description="Homoserine O-acetyltransferase">
    <location>
        <begin position="2"/>
        <end position="358"/>
    </location>
</feature>
<feature type="domain" description="AB hydrolase-1" evidence="1">
    <location>
        <begin position="41"/>
        <end position="343"/>
    </location>
</feature>
<feature type="active site" description="Nucleophile" evidence="1 9">
    <location>
        <position position="143"/>
    </location>
</feature>
<feature type="active site" evidence="1 9">
    <location>
        <position position="304"/>
    </location>
</feature>
<feature type="active site" evidence="1 9">
    <location>
        <position position="337"/>
    </location>
</feature>
<feature type="binding site" evidence="1 10">
    <location>
        <position position="212"/>
    </location>
    <ligand>
        <name>substrate</name>
    </ligand>
</feature>
<feature type="binding site" evidence="1 10">
    <location>
        <position position="338"/>
    </location>
    <ligand>
        <name>substrate</name>
    </ligand>
</feature>
<feature type="mutagenesis site" description="Can no longer use acetyl-CoA as acyl donor, but can use succinyl-CoA." evidence="4">
    <original>L</original>
    <variation>R</variation>
    <location>
        <position position="306"/>
    </location>
</feature>
<feature type="strand" evidence="11">
    <location>
        <begin position="4"/>
        <end position="12"/>
    </location>
</feature>
<feature type="strand" evidence="11">
    <location>
        <begin position="24"/>
        <end position="33"/>
    </location>
</feature>
<feature type="strand" evidence="11">
    <location>
        <begin position="42"/>
        <end position="46"/>
    </location>
</feature>
<feature type="strand" evidence="11">
    <location>
        <begin position="58"/>
        <end position="60"/>
    </location>
</feature>
<feature type="helix" evidence="11">
    <location>
        <begin position="66"/>
        <end position="68"/>
    </location>
</feature>
<feature type="strand" evidence="11">
    <location>
        <begin position="73"/>
        <end position="76"/>
    </location>
</feature>
<feature type="turn" evidence="11">
    <location>
        <begin position="77"/>
        <end position="79"/>
    </location>
</feature>
<feature type="strand" evidence="11">
    <location>
        <begin position="81"/>
        <end position="85"/>
    </location>
</feature>
<feature type="strand" evidence="11">
    <location>
        <begin position="91"/>
        <end position="95"/>
    </location>
</feature>
<feature type="turn" evidence="11">
    <location>
        <begin position="102"/>
        <end position="104"/>
    </location>
</feature>
<feature type="strand" evidence="11">
    <location>
        <begin position="105"/>
        <end position="107"/>
    </location>
</feature>
<feature type="helix" evidence="11">
    <location>
        <begin position="109"/>
        <end position="111"/>
    </location>
</feature>
<feature type="helix" evidence="11">
    <location>
        <begin position="117"/>
        <end position="130"/>
    </location>
</feature>
<feature type="strand" evidence="11">
    <location>
        <begin position="136"/>
        <end position="142"/>
    </location>
</feature>
<feature type="helix" evidence="11">
    <location>
        <begin position="144"/>
        <end position="155"/>
    </location>
</feature>
<feature type="strand" evidence="11">
    <location>
        <begin position="159"/>
        <end position="167"/>
    </location>
</feature>
<feature type="helix" evidence="11">
    <location>
        <begin position="174"/>
        <end position="188"/>
    </location>
</feature>
<feature type="helix" evidence="11">
    <location>
        <begin position="194"/>
        <end position="196"/>
    </location>
</feature>
<feature type="helix" evidence="11">
    <location>
        <begin position="205"/>
        <end position="219"/>
    </location>
</feature>
<feature type="helix" evidence="11">
    <location>
        <begin position="222"/>
        <end position="228"/>
    </location>
</feature>
<feature type="turn" evidence="11">
    <location>
        <begin position="229"/>
        <end position="231"/>
    </location>
</feature>
<feature type="helix" evidence="11">
    <location>
        <begin position="245"/>
        <end position="258"/>
    </location>
</feature>
<feature type="helix" evidence="11">
    <location>
        <begin position="263"/>
        <end position="275"/>
    </location>
</feature>
<feature type="turn" evidence="11">
    <location>
        <begin position="278"/>
        <end position="281"/>
    </location>
</feature>
<feature type="helix" evidence="11">
    <location>
        <begin position="285"/>
        <end position="289"/>
    </location>
</feature>
<feature type="strand" evidence="11">
    <location>
        <begin position="294"/>
        <end position="301"/>
    </location>
</feature>
<feature type="strand" evidence="11">
    <location>
        <begin position="305"/>
        <end position="307"/>
    </location>
</feature>
<feature type="helix" evidence="11">
    <location>
        <begin position="309"/>
        <end position="321"/>
    </location>
</feature>
<feature type="strand" evidence="11">
    <location>
        <begin position="325"/>
        <end position="331"/>
    </location>
</feature>
<feature type="helix" evidence="11">
    <location>
        <begin position="336"/>
        <end position="338"/>
    </location>
</feature>
<feature type="helix" evidence="11">
    <location>
        <begin position="339"/>
        <end position="342"/>
    </location>
</feature>
<feature type="helix" evidence="11">
    <location>
        <begin position="344"/>
        <end position="356"/>
    </location>
</feature>
<sequence>MSVQNVVLFDTQPLTLMLGGKLSHINVAYQTYGTLNAEKNNAVLICHALTGDAEPYFDDGRDGWWQNFMGAGLALDTDRYFFISSNVLGGCKGTTGPSSINPQTGKPYGSQFPNIVVQDIVKVQKALLDHLGISHLKAIIGGSFGGMQANQWAIDYPDFMDNIVNLCSSIYFSAEAIGFNHVMRQAVINDPNFNGGDYYEGTPPDQGLSIARMLGMLTYRTDLQLAKAFGRATKSDGSFWGDYFQVESYLSYQGKKFLERFDANSYLHLLRALDMYDPSLGYDNVKEALSRIKARYTLVSVTTDQLFKPIDLYKSKQLLEQSGVDLHFYEFPSDYGHDAFLVDYDQFEKRIRDGLAGN</sequence>
<comment type="function">
    <text evidence="2 4">Transfers an acetyl group from acetyl-CoA to L-homoserine, forming acetyl-L-homoserine (PubMed:10913262, PubMed:28581482). Utilizes a ping-pong kinetic mechanism in which the acetyl group of acetyl-CoA is initially transferred to the enzyme to form an acetyl-enzyme intermediate before subsequent transfer to homoserine to form the final product, O-acetylhomoserine (PubMed:10913262).</text>
</comment>
<comment type="catalytic activity">
    <reaction evidence="1 2 4">
        <text>L-homoserine + acetyl-CoA = O-acetyl-L-homoserine + CoA</text>
        <dbReference type="Rhea" id="RHEA:13701"/>
        <dbReference type="ChEBI" id="CHEBI:57287"/>
        <dbReference type="ChEBI" id="CHEBI:57288"/>
        <dbReference type="ChEBI" id="CHEBI:57476"/>
        <dbReference type="ChEBI" id="CHEBI:57716"/>
        <dbReference type="EC" id="2.3.1.31"/>
    </reaction>
</comment>
<comment type="biophysicochemical properties">
    <kinetics>
        <KM evidence="2">130 uM for L-homoserine (at 25 degrees Celsius and pH 7.5)</KM>
        <KM evidence="4">570 uM for L-homoserine</KM>
        <KM evidence="2">140 uM for acetyl-CoA (at 25 degrees Celsius and pH 7.5)</KM>
        <KM evidence="4">586 uM for acetyl-CoA</KM>
        <KM evidence="2">90 uM for propionyl-CoA (at 25 degrees Celsius and pH 7.5)</KM>
        <KM evidence="2">130 uM for crotonyl-CoA (at 25 degrees Celsius and pH 7.5)</KM>
        <KM evidence="2">210 uM for butyryl-CoA (at 25 degrees Celsius and pH 7.5)</KM>
        <KM evidence="2">280 uM for glutaryl-CoA (at 25 degrees Celsius and pH 7.5)</KM>
        <KM evidence="2">360 uM for succinyl-CoA (at 25 degrees Celsius and pH 7.5)</KM>
        <KM evidence="2">1400 uM for 4-nitrophenyl acetate (at 25 degrees Celsius and pH 7.5)</KM>
        <KM evidence="2">4700 uM for D-homoserine (at 25 degrees Celsius and pH 7.5)</KM>
        <text evidence="2 4">kcat is 92 sec(-1) with acetyl-CoA and L-homoserine as substrates (at 25 degrees Celsius and pH 7.5) (PubMed:10913262). kcat is 5 sec(-1) (PubMed:28581482).</text>
    </kinetics>
</comment>
<comment type="pathway">
    <text evidence="1">Amino-acid biosynthesis; L-methionine biosynthesis via de novo pathway; O-acetyl-L-homoserine from L-homoserine: step 1/1.</text>
</comment>
<comment type="subunit">
    <text evidence="1 2 3">Homodimer.</text>
</comment>
<comment type="subcellular location">
    <subcellularLocation>
        <location evidence="1">Cytoplasm</location>
    </subcellularLocation>
</comment>
<comment type="mass spectrometry"/>
<comment type="similarity">
    <text evidence="1">Belongs to the AB hydrolase superfamily. MetX family.</text>
</comment>
<keyword id="KW-0002">3D-structure</keyword>
<keyword id="KW-0012">Acyltransferase</keyword>
<keyword id="KW-0028">Amino-acid biosynthesis</keyword>
<keyword id="KW-0963">Cytoplasm</keyword>
<keyword id="KW-0903">Direct protein sequencing</keyword>
<keyword id="KW-0486">Methionine biosynthesis</keyword>
<keyword id="KW-1185">Reference proteome</keyword>
<keyword id="KW-0808">Transferase</keyword>